<name>RS21_SHEB9</name>
<evidence type="ECO:0000255" key="1">
    <source>
        <dbReference type="HAMAP-Rule" id="MF_00358"/>
    </source>
</evidence>
<evidence type="ECO:0000305" key="2"/>
<protein>
    <recommendedName>
        <fullName evidence="1">Small ribosomal subunit protein bS21</fullName>
    </recommendedName>
    <alternativeName>
        <fullName evidence="2">30S ribosomal protein S21</fullName>
    </alternativeName>
</protein>
<gene>
    <name evidence="1" type="primary">rpsU</name>
    <name type="ordered locus">Sbal195_1224</name>
</gene>
<sequence length="71" mass="8345">MPIIKVRENEPFDVALRRFKRSCEKAGILADVRAREFYEKPTTARKRAKAAAVKRLAKKLSRENARRVRLY</sequence>
<dbReference type="EMBL" id="CP000891">
    <property type="protein sequence ID" value="ABX48399.1"/>
    <property type="molecule type" value="Genomic_DNA"/>
</dbReference>
<dbReference type="RefSeq" id="WP_006080725.1">
    <property type="nucleotide sequence ID" value="NC_009997.1"/>
</dbReference>
<dbReference type="SMR" id="A9L514"/>
<dbReference type="GeneID" id="94729004"/>
<dbReference type="KEGG" id="sbn:Sbal195_1224"/>
<dbReference type="HOGENOM" id="CLU_159258_1_0_6"/>
<dbReference type="Proteomes" id="UP000000770">
    <property type="component" value="Chromosome"/>
</dbReference>
<dbReference type="GO" id="GO:1990904">
    <property type="term" value="C:ribonucleoprotein complex"/>
    <property type="evidence" value="ECO:0007669"/>
    <property type="project" value="UniProtKB-KW"/>
</dbReference>
<dbReference type="GO" id="GO:0005840">
    <property type="term" value="C:ribosome"/>
    <property type="evidence" value="ECO:0007669"/>
    <property type="project" value="UniProtKB-KW"/>
</dbReference>
<dbReference type="GO" id="GO:0003735">
    <property type="term" value="F:structural constituent of ribosome"/>
    <property type="evidence" value="ECO:0007669"/>
    <property type="project" value="InterPro"/>
</dbReference>
<dbReference type="GO" id="GO:0006412">
    <property type="term" value="P:translation"/>
    <property type="evidence" value="ECO:0007669"/>
    <property type="project" value="UniProtKB-UniRule"/>
</dbReference>
<dbReference type="Gene3D" id="1.20.5.1150">
    <property type="entry name" value="Ribosomal protein S8"/>
    <property type="match status" value="1"/>
</dbReference>
<dbReference type="HAMAP" id="MF_00358">
    <property type="entry name" value="Ribosomal_bS21"/>
    <property type="match status" value="1"/>
</dbReference>
<dbReference type="InterPro" id="IPR001911">
    <property type="entry name" value="Ribosomal_bS21"/>
</dbReference>
<dbReference type="InterPro" id="IPR018278">
    <property type="entry name" value="Ribosomal_bS21_CS"/>
</dbReference>
<dbReference type="InterPro" id="IPR038380">
    <property type="entry name" value="Ribosomal_bS21_sf"/>
</dbReference>
<dbReference type="NCBIfam" id="TIGR00030">
    <property type="entry name" value="S21p"/>
    <property type="match status" value="1"/>
</dbReference>
<dbReference type="PANTHER" id="PTHR21109">
    <property type="entry name" value="MITOCHONDRIAL 28S RIBOSOMAL PROTEIN S21"/>
    <property type="match status" value="1"/>
</dbReference>
<dbReference type="PANTHER" id="PTHR21109:SF22">
    <property type="entry name" value="SMALL RIBOSOMAL SUBUNIT PROTEIN BS21"/>
    <property type="match status" value="1"/>
</dbReference>
<dbReference type="Pfam" id="PF01165">
    <property type="entry name" value="Ribosomal_S21"/>
    <property type="match status" value="1"/>
</dbReference>
<dbReference type="PRINTS" id="PR00976">
    <property type="entry name" value="RIBOSOMALS21"/>
</dbReference>
<dbReference type="PROSITE" id="PS01181">
    <property type="entry name" value="RIBOSOMAL_S21"/>
    <property type="match status" value="1"/>
</dbReference>
<comment type="similarity">
    <text evidence="1">Belongs to the bacterial ribosomal protein bS21 family.</text>
</comment>
<feature type="chain" id="PRO_1000079419" description="Small ribosomal subunit protein bS21">
    <location>
        <begin position="1"/>
        <end position="71"/>
    </location>
</feature>
<reference key="1">
    <citation type="submission" date="2007-11" db="EMBL/GenBank/DDBJ databases">
        <title>Complete sequence of chromosome of Shewanella baltica OS195.</title>
        <authorList>
            <consortium name="US DOE Joint Genome Institute"/>
            <person name="Copeland A."/>
            <person name="Lucas S."/>
            <person name="Lapidus A."/>
            <person name="Barry K."/>
            <person name="Glavina del Rio T."/>
            <person name="Dalin E."/>
            <person name="Tice H."/>
            <person name="Pitluck S."/>
            <person name="Chain P."/>
            <person name="Malfatti S."/>
            <person name="Shin M."/>
            <person name="Vergez L."/>
            <person name="Schmutz J."/>
            <person name="Larimer F."/>
            <person name="Land M."/>
            <person name="Hauser L."/>
            <person name="Kyrpides N."/>
            <person name="Kim E."/>
            <person name="Brettar I."/>
            <person name="Rodrigues J."/>
            <person name="Konstantinidis K."/>
            <person name="Klappenbach J."/>
            <person name="Hofle M."/>
            <person name="Tiedje J."/>
            <person name="Richardson P."/>
        </authorList>
    </citation>
    <scope>NUCLEOTIDE SEQUENCE [LARGE SCALE GENOMIC DNA]</scope>
    <source>
        <strain>OS195</strain>
    </source>
</reference>
<keyword id="KW-0687">Ribonucleoprotein</keyword>
<keyword id="KW-0689">Ribosomal protein</keyword>
<proteinExistence type="inferred from homology"/>
<organism>
    <name type="scientific">Shewanella baltica (strain OS195)</name>
    <dbReference type="NCBI Taxonomy" id="399599"/>
    <lineage>
        <taxon>Bacteria</taxon>
        <taxon>Pseudomonadati</taxon>
        <taxon>Pseudomonadota</taxon>
        <taxon>Gammaproteobacteria</taxon>
        <taxon>Alteromonadales</taxon>
        <taxon>Shewanellaceae</taxon>
        <taxon>Shewanella</taxon>
    </lineage>
</organism>
<accession>A9L514</accession>